<accession>Q1BH79</accession>
<evidence type="ECO:0000255" key="1">
    <source>
        <dbReference type="HAMAP-Rule" id="MF_00473"/>
    </source>
</evidence>
<evidence type="ECO:0000305" key="2"/>
<reference key="1">
    <citation type="submission" date="2006-05" db="EMBL/GenBank/DDBJ databases">
        <title>Complete sequence of chromosome 3 of Burkholderia cenocepacia AU 1054.</title>
        <authorList>
            <consortium name="US DOE Joint Genome Institute"/>
            <person name="Copeland A."/>
            <person name="Lucas S."/>
            <person name="Lapidus A."/>
            <person name="Barry K."/>
            <person name="Detter J.C."/>
            <person name="Glavina del Rio T."/>
            <person name="Hammon N."/>
            <person name="Israni S."/>
            <person name="Dalin E."/>
            <person name="Tice H."/>
            <person name="Pitluck S."/>
            <person name="Chain P."/>
            <person name="Malfatti S."/>
            <person name="Shin M."/>
            <person name="Vergez L."/>
            <person name="Schmutz J."/>
            <person name="Larimer F."/>
            <person name="Land M."/>
            <person name="Hauser L."/>
            <person name="Kyrpides N."/>
            <person name="Lykidis A."/>
            <person name="LiPuma J.J."/>
            <person name="Konstantinidis K."/>
            <person name="Tiedje J.M."/>
            <person name="Richardson P."/>
        </authorList>
    </citation>
    <scope>NUCLEOTIDE SEQUENCE [LARGE SCALE GENOMIC DNA]</scope>
    <source>
        <strain>AU 1054</strain>
    </source>
</reference>
<comment type="function">
    <text evidence="1">Catalyzes the reversible isomerization of glucose-6-phosphate to fructose-6-phosphate.</text>
</comment>
<comment type="catalytic activity">
    <reaction evidence="1">
        <text>alpha-D-glucose 6-phosphate = beta-D-fructose 6-phosphate</text>
        <dbReference type="Rhea" id="RHEA:11816"/>
        <dbReference type="ChEBI" id="CHEBI:57634"/>
        <dbReference type="ChEBI" id="CHEBI:58225"/>
        <dbReference type="EC" id="5.3.1.9"/>
    </reaction>
</comment>
<comment type="pathway">
    <text evidence="1">Carbohydrate biosynthesis; gluconeogenesis.</text>
</comment>
<comment type="pathway">
    <text evidence="1">Carbohydrate degradation; glycolysis; D-glyceraldehyde 3-phosphate and glycerone phosphate from D-glucose: step 2/4.</text>
</comment>
<comment type="subcellular location">
    <subcellularLocation>
        <location evidence="1">Cytoplasm</location>
    </subcellularLocation>
</comment>
<comment type="similarity">
    <text evidence="1">Belongs to the GPI family.</text>
</comment>
<comment type="sequence caution" evidence="2">
    <conflict type="erroneous initiation">
        <sequence resource="EMBL-CDS" id="ABF81026"/>
    </conflict>
</comment>
<proteinExistence type="inferred from homology"/>
<sequence length="540" mass="59259">MTLKSLPAWTALQSHFEQIRHARLRDWFAPENDRAPTRAERFTIPGGGLAADFSKNRIDDETLRLLVQLARDAGVEARRDAMFAGEIVNPTEGRAALHTALRATDPQAPFHAQVSAERAKMATFARAVRSGTWTGYTGKRIRHVINIGIGGSDLGPKMVVHALHHVATPEISTHFVSNVDGADLARVLEQVDPEETLAIIVSKTFTTLETMTNARSLRDWFVARGCPEDALAKHFVGVSANPAEVVKFGIAADNVFEMWDWVGGRYSLWSAVGLSIMIAIGPEQFDELLAGANDMDRHFREAPLERNLPVLLGLIGIWYRNFFGSQSYLVAPYSEALHYLPSYLQQLEMESNGKSARLDGTFVDYPTSAVTWGEPGTNGQHAFFQMLHQGPTIVPIDFIAVLTPEHPLAGHHPKLLANCFAQSEALMLGRTLEEARKVAGPGKEALAPHLTFPGNRPTTTLLVDALTPRTLGALIALYEHKVLVQATVWDINPFDQWGVELGKILGKVVEGDLSAESVDPAKHDSSTTALIERARAALKR</sequence>
<organism>
    <name type="scientific">Burkholderia orbicola (strain AU 1054)</name>
    <dbReference type="NCBI Taxonomy" id="331271"/>
    <lineage>
        <taxon>Bacteria</taxon>
        <taxon>Pseudomonadati</taxon>
        <taxon>Pseudomonadota</taxon>
        <taxon>Betaproteobacteria</taxon>
        <taxon>Burkholderiales</taxon>
        <taxon>Burkholderiaceae</taxon>
        <taxon>Burkholderia</taxon>
        <taxon>Burkholderia cepacia complex</taxon>
        <taxon>Burkholderia orbicola</taxon>
    </lineage>
</organism>
<gene>
    <name evidence="1" type="primary">pgi</name>
    <name type="ordered locus">Bcen_6162</name>
</gene>
<name>G6PI_BURO1</name>
<protein>
    <recommendedName>
        <fullName evidence="1">Glucose-6-phosphate isomerase</fullName>
        <shortName evidence="1">GPI</shortName>
        <ecNumber evidence="1">5.3.1.9</ecNumber>
    </recommendedName>
    <alternativeName>
        <fullName evidence="1">Phosphoglucose isomerase</fullName>
        <shortName evidence="1">PGI</shortName>
    </alternativeName>
    <alternativeName>
        <fullName evidence="1">Phosphohexose isomerase</fullName>
        <shortName evidence="1">PHI</shortName>
    </alternativeName>
</protein>
<feature type="chain" id="PRO_0000252611" description="Glucose-6-phosphate isomerase">
    <location>
        <begin position="1"/>
        <end position="540"/>
    </location>
</feature>
<feature type="active site" description="Proton donor" evidence="1">
    <location>
        <position position="350"/>
    </location>
</feature>
<feature type="active site" evidence="1">
    <location>
        <position position="381"/>
    </location>
</feature>
<feature type="active site" evidence="1">
    <location>
        <position position="503"/>
    </location>
</feature>
<dbReference type="EC" id="5.3.1.9" evidence="1"/>
<dbReference type="EMBL" id="CP000380">
    <property type="protein sequence ID" value="ABF81026.1"/>
    <property type="status" value="ALT_INIT"/>
    <property type="molecule type" value="Genomic_DNA"/>
</dbReference>
<dbReference type="SMR" id="Q1BH79"/>
<dbReference type="HOGENOM" id="CLU_017947_3_1_4"/>
<dbReference type="UniPathway" id="UPA00109">
    <property type="reaction ID" value="UER00181"/>
</dbReference>
<dbReference type="UniPathway" id="UPA00138"/>
<dbReference type="GO" id="GO:0005829">
    <property type="term" value="C:cytosol"/>
    <property type="evidence" value="ECO:0007669"/>
    <property type="project" value="TreeGrafter"/>
</dbReference>
<dbReference type="GO" id="GO:0097367">
    <property type="term" value="F:carbohydrate derivative binding"/>
    <property type="evidence" value="ECO:0007669"/>
    <property type="project" value="InterPro"/>
</dbReference>
<dbReference type="GO" id="GO:0004347">
    <property type="term" value="F:glucose-6-phosphate isomerase activity"/>
    <property type="evidence" value="ECO:0007669"/>
    <property type="project" value="UniProtKB-UniRule"/>
</dbReference>
<dbReference type="GO" id="GO:0048029">
    <property type="term" value="F:monosaccharide binding"/>
    <property type="evidence" value="ECO:0007669"/>
    <property type="project" value="TreeGrafter"/>
</dbReference>
<dbReference type="GO" id="GO:0006094">
    <property type="term" value="P:gluconeogenesis"/>
    <property type="evidence" value="ECO:0007669"/>
    <property type="project" value="UniProtKB-UniRule"/>
</dbReference>
<dbReference type="GO" id="GO:0051156">
    <property type="term" value="P:glucose 6-phosphate metabolic process"/>
    <property type="evidence" value="ECO:0007669"/>
    <property type="project" value="TreeGrafter"/>
</dbReference>
<dbReference type="GO" id="GO:0006096">
    <property type="term" value="P:glycolytic process"/>
    <property type="evidence" value="ECO:0007669"/>
    <property type="project" value="UniProtKB-UniRule"/>
</dbReference>
<dbReference type="CDD" id="cd05015">
    <property type="entry name" value="SIS_PGI_1"/>
    <property type="match status" value="1"/>
</dbReference>
<dbReference type="CDD" id="cd05016">
    <property type="entry name" value="SIS_PGI_2"/>
    <property type="match status" value="1"/>
</dbReference>
<dbReference type="Gene3D" id="1.10.1390.10">
    <property type="match status" value="1"/>
</dbReference>
<dbReference type="Gene3D" id="3.40.50.10490">
    <property type="entry name" value="Glucose-6-phosphate isomerase like protein, domain 1"/>
    <property type="match status" value="2"/>
</dbReference>
<dbReference type="HAMAP" id="MF_00473">
    <property type="entry name" value="G6P_isomerase"/>
    <property type="match status" value="1"/>
</dbReference>
<dbReference type="InterPro" id="IPR001672">
    <property type="entry name" value="G6P_Isomerase"/>
</dbReference>
<dbReference type="InterPro" id="IPR023096">
    <property type="entry name" value="G6P_Isomerase_C"/>
</dbReference>
<dbReference type="InterPro" id="IPR018189">
    <property type="entry name" value="Phosphoglucose_isomerase_CS"/>
</dbReference>
<dbReference type="InterPro" id="IPR046348">
    <property type="entry name" value="SIS_dom_sf"/>
</dbReference>
<dbReference type="InterPro" id="IPR035476">
    <property type="entry name" value="SIS_PGI_1"/>
</dbReference>
<dbReference type="InterPro" id="IPR035482">
    <property type="entry name" value="SIS_PGI_2"/>
</dbReference>
<dbReference type="NCBIfam" id="NF001211">
    <property type="entry name" value="PRK00179.1"/>
    <property type="match status" value="1"/>
</dbReference>
<dbReference type="PANTHER" id="PTHR11469">
    <property type="entry name" value="GLUCOSE-6-PHOSPHATE ISOMERASE"/>
    <property type="match status" value="1"/>
</dbReference>
<dbReference type="PANTHER" id="PTHR11469:SF1">
    <property type="entry name" value="GLUCOSE-6-PHOSPHATE ISOMERASE"/>
    <property type="match status" value="1"/>
</dbReference>
<dbReference type="Pfam" id="PF00342">
    <property type="entry name" value="PGI"/>
    <property type="match status" value="1"/>
</dbReference>
<dbReference type="PRINTS" id="PR00662">
    <property type="entry name" value="G6PISOMERASE"/>
</dbReference>
<dbReference type="SUPFAM" id="SSF53697">
    <property type="entry name" value="SIS domain"/>
    <property type="match status" value="1"/>
</dbReference>
<dbReference type="PROSITE" id="PS00765">
    <property type="entry name" value="P_GLUCOSE_ISOMERASE_1"/>
    <property type="match status" value="1"/>
</dbReference>
<dbReference type="PROSITE" id="PS00174">
    <property type="entry name" value="P_GLUCOSE_ISOMERASE_2"/>
    <property type="match status" value="1"/>
</dbReference>
<dbReference type="PROSITE" id="PS51463">
    <property type="entry name" value="P_GLUCOSE_ISOMERASE_3"/>
    <property type="match status" value="1"/>
</dbReference>
<keyword id="KW-0963">Cytoplasm</keyword>
<keyword id="KW-0312">Gluconeogenesis</keyword>
<keyword id="KW-0324">Glycolysis</keyword>
<keyword id="KW-0413">Isomerase</keyword>